<name>PHOP_SALTY</name>
<evidence type="ECO:0000250" key="1"/>
<evidence type="ECO:0000255" key="2">
    <source>
        <dbReference type="PROSITE-ProRule" id="PRU00169"/>
    </source>
</evidence>
<evidence type="ECO:0000255" key="3">
    <source>
        <dbReference type="PROSITE-ProRule" id="PRU01091"/>
    </source>
</evidence>
<evidence type="ECO:0000269" key="4">
    <source>
    </source>
</evidence>
<evidence type="ECO:0000269" key="5">
    <source>
    </source>
</evidence>
<evidence type="ECO:0000269" key="6">
    <source>
    </source>
</evidence>
<evidence type="ECO:0000269" key="7">
    <source>
    </source>
</evidence>
<evidence type="ECO:0000269" key="8">
    <source>
    </source>
</evidence>
<evidence type="ECO:0000269" key="9">
    <source>
    </source>
</evidence>
<evidence type="ECO:0000269" key="10">
    <source>
    </source>
</evidence>
<evidence type="ECO:0000269" key="11">
    <source>
    </source>
</evidence>
<evidence type="ECO:0000269" key="12">
    <source>
    </source>
</evidence>
<evidence type="ECO:0000269" key="13">
    <source>
    </source>
</evidence>
<evidence type="ECO:0000303" key="14">
    <source>
    </source>
</evidence>
<evidence type="ECO:0000303" key="15">
    <source>
    </source>
</evidence>
<evidence type="ECO:0000303" key="16">
    <source>
    </source>
</evidence>
<evidence type="ECO:0000303" key="17">
    <source>
    </source>
</evidence>
<evidence type="ECO:0000305" key="18"/>
<organism>
    <name type="scientific">Salmonella typhimurium (strain LT2 / SGSC1412 / ATCC 700720)</name>
    <dbReference type="NCBI Taxonomy" id="99287"/>
    <lineage>
        <taxon>Bacteria</taxon>
        <taxon>Pseudomonadati</taxon>
        <taxon>Pseudomonadota</taxon>
        <taxon>Gammaproteobacteria</taxon>
        <taxon>Enterobacterales</taxon>
        <taxon>Enterobacteriaceae</taxon>
        <taxon>Salmonella</taxon>
    </lineage>
</organism>
<dbReference type="EMBL" id="M24424">
    <property type="protein sequence ID" value="AAA27188.1"/>
    <property type="molecule type" value="Genomic_DNA"/>
</dbReference>
<dbReference type="EMBL" id="M25241">
    <property type="protein sequence ID" value="AAA27187.1"/>
    <property type="molecule type" value="Genomic_DNA"/>
</dbReference>
<dbReference type="EMBL" id="AE006468">
    <property type="protein sequence ID" value="AAL20160.1"/>
    <property type="molecule type" value="Genomic_DNA"/>
</dbReference>
<dbReference type="PIR" id="A32932">
    <property type="entry name" value="RGEBFT"/>
</dbReference>
<dbReference type="RefSeq" id="NP_460201.1">
    <property type="nucleotide sequence ID" value="NC_003197.2"/>
</dbReference>
<dbReference type="RefSeq" id="WP_000986522.1">
    <property type="nucleotide sequence ID" value="NC_003197.2"/>
</dbReference>
<dbReference type="SMR" id="P0DM78"/>
<dbReference type="STRING" id="99287.STM1231"/>
<dbReference type="PaxDb" id="99287-STM1231"/>
<dbReference type="GeneID" id="1252749"/>
<dbReference type="KEGG" id="stm:STM1231"/>
<dbReference type="PATRIC" id="fig|99287.12.peg.1302"/>
<dbReference type="HOGENOM" id="CLU_000445_30_1_6"/>
<dbReference type="OMA" id="SYPRRVW"/>
<dbReference type="PhylomeDB" id="P0DM78"/>
<dbReference type="BioCyc" id="SENT99287:STM1231-MONOMER"/>
<dbReference type="PHI-base" id="PHI:11917"/>
<dbReference type="PHI-base" id="PHI:2674"/>
<dbReference type="PHI-base" id="PHI:6591"/>
<dbReference type="PHI-base" id="PHI:9415"/>
<dbReference type="Proteomes" id="UP000001014">
    <property type="component" value="Chromosome"/>
</dbReference>
<dbReference type="CollecTF" id="EXPREG_000008e0"/>
<dbReference type="GO" id="GO:0005829">
    <property type="term" value="C:cytosol"/>
    <property type="evidence" value="ECO:0000318"/>
    <property type="project" value="GO_Central"/>
</dbReference>
<dbReference type="GO" id="GO:0032993">
    <property type="term" value="C:protein-DNA complex"/>
    <property type="evidence" value="ECO:0000318"/>
    <property type="project" value="GO_Central"/>
</dbReference>
<dbReference type="GO" id="GO:0001216">
    <property type="term" value="F:DNA-binding transcription activator activity"/>
    <property type="evidence" value="ECO:0000314"/>
    <property type="project" value="UniProtKB"/>
</dbReference>
<dbReference type="GO" id="GO:0000156">
    <property type="term" value="F:phosphorelay response regulator activity"/>
    <property type="evidence" value="ECO:0000318"/>
    <property type="project" value="GO_Central"/>
</dbReference>
<dbReference type="GO" id="GO:0000976">
    <property type="term" value="F:transcription cis-regulatory region binding"/>
    <property type="evidence" value="ECO:0000318"/>
    <property type="project" value="GO_Central"/>
</dbReference>
<dbReference type="GO" id="GO:0006355">
    <property type="term" value="P:regulation of DNA-templated transcription"/>
    <property type="evidence" value="ECO:0000318"/>
    <property type="project" value="GO_Central"/>
</dbReference>
<dbReference type="CDD" id="cd19934">
    <property type="entry name" value="REC_OmpR_EcPhoP-like"/>
    <property type="match status" value="1"/>
</dbReference>
<dbReference type="CDD" id="cd00383">
    <property type="entry name" value="trans_reg_C"/>
    <property type="match status" value="1"/>
</dbReference>
<dbReference type="FunFam" id="3.40.50.2300:FF:000002">
    <property type="entry name" value="DNA-binding response regulator PhoP"/>
    <property type="match status" value="1"/>
</dbReference>
<dbReference type="FunFam" id="1.10.10.10:FF:000098">
    <property type="entry name" value="Two-component system response regulator PhoP"/>
    <property type="match status" value="1"/>
</dbReference>
<dbReference type="Gene3D" id="3.40.50.2300">
    <property type="match status" value="1"/>
</dbReference>
<dbReference type="Gene3D" id="6.10.250.690">
    <property type="match status" value="1"/>
</dbReference>
<dbReference type="Gene3D" id="1.10.10.10">
    <property type="entry name" value="Winged helix-like DNA-binding domain superfamily/Winged helix DNA-binding domain"/>
    <property type="match status" value="1"/>
</dbReference>
<dbReference type="InterPro" id="IPR011006">
    <property type="entry name" value="CheY-like_superfamily"/>
</dbReference>
<dbReference type="InterPro" id="IPR001867">
    <property type="entry name" value="OmpR/PhoB-type_DNA-bd"/>
</dbReference>
<dbReference type="InterPro" id="IPR001789">
    <property type="entry name" value="Sig_transdc_resp-reg_receiver"/>
</dbReference>
<dbReference type="InterPro" id="IPR039420">
    <property type="entry name" value="WalR-like"/>
</dbReference>
<dbReference type="InterPro" id="IPR036388">
    <property type="entry name" value="WH-like_DNA-bd_sf"/>
</dbReference>
<dbReference type="NCBIfam" id="NF008078">
    <property type="entry name" value="PRK10816.1"/>
    <property type="match status" value="1"/>
</dbReference>
<dbReference type="PANTHER" id="PTHR48111">
    <property type="entry name" value="REGULATOR OF RPOS"/>
    <property type="match status" value="1"/>
</dbReference>
<dbReference type="PANTHER" id="PTHR48111:SF71">
    <property type="entry name" value="TRANSCRIPTIONAL REGULATORY PROTEIN PHOP"/>
    <property type="match status" value="1"/>
</dbReference>
<dbReference type="Pfam" id="PF00072">
    <property type="entry name" value="Response_reg"/>
    <property type="match status" value="1"/>
</dbReference>
<dbReference type="Pfam" id="PF00486">
    <property type="entry name" value="Trans_reg_C"/>
    <property type="match status" value="1"/>
</dbReference>
<dbReference type="SMART" id="SM00448">
    <property type="entry name" value="REC"/>
    <property type="match status" value="1"/>
</dbReference>
<dbReference type="SMART" id="SM00862">
    <property type="entry name" value="Trans_reg_C"/>
    <property type="match status" value="1"/>
</dbReference>
<dbReference type="SUPFAM" id="SSF52172">
    <property type="entry name" value="CheY-like"/>
    <property type="match status" value="1"/>
</dbReference>
<dbReference type="PROSITE" id="PS51755">
    <property type="entry name" value="OMPR_PHOB"/>
    <property type="match status" value="1"/>
</dbReference>
<dbReference type="PROSITE" id="PS50110">
    <property type="entry name" value="RESPONSE_REGULATORY"/>
    <property type="match status" value="1"/>
</dbReference>
<gene>
    <name type="primary">phoP</name>
    <name type="ordered locus">STM1231</name>
</gene>
<accession>P0DM78</accession>
<accession>P14146</accession>
<keyword id="KW-0010">Activator</keyword>
<keyword id="KW-0963">Cytoplasm</keyword>
<keyword id="KW-0238">DNA-binding</keyword>
<keyword id="KW-0341">Growth regulation</keyword>
<keyword id="KW-0597">Phosphoprotein</keyword>
<keyword id="KW-1185">Reference proteome</keyword>
<keyword id="KW-0678">Repressor</keyword>
<keyword id="KW-0804">Transcription</keyword>
<keyword id="KW-0805">Transcription regulation</keyword>
<keyword id="KW-0902">Two-component regulatory system</keyword>
<keyword id="KW-0843">Virulence</keyword>
<comment type="function">
    <text evidence="8 9 10 13 18">Member of the two-component regulatory system PhoP/PhoQ which regulates the expression of genes involved in virulence, adaptation to acidic and low Mg(2+) environments and resistance to host defense antimicrobial peptides (PubMed:2544889, PubMed:25972862, PubMed:9573193). Essential for intramacrophage survival of S.typhimurium. In low periplasmic Mg(2+), PhoQ phosphorylates PhoP, resulting in the expression of PhoP-activated genes (PAG) and repression of PhoP-repressed genes (PRG). In high periplasmic Mg(2+), PhoQ dephosphorylates phospho-PhoP, resulting in the repression of PAG and may lead to expression of some PRG. Directly activates the transcription of SsrB (PubMed:31033442). Essential for transcription of spiC inside macrophages by controlling the expression of the two-component regulatory system SsrB/SsaR (SpiR) and Pir at transcriptional and post-transcriptional levels respectively. Promotes expression of the two-component regulatory system PmrA/PmrB via activation of pmrD gene. Is required to attenuate bacterial growth within fibroblast cells and to enhance bacterial resistance to bile in intestinal cells. Negatively regulates prgH, which is required for invasion of epithelial cells. PhoP uses multiple mechanisms to promote transcription and activates promoters for PAG at low (uM range) Mg(2+) concentrations (Probable). Involved in acid tolerance.</text>
</comment>
<comment type="subunit">
    <text evidence="1">Monomer in the inactive, unphosphorylated state and dimer in the active, phosphorylated state.</text>
</comment>
<comment type="subcellular location">
    <subcellularLocation>
        <location evidence="18">Cytoplasm</location>
    </subcellularLocation>
</comment>
<comment type="induction">
    <text evidence="6 10 12">The phoP/phoQ operon is positively autoregulated by both PhoP and PhoQ in a Mg(2+)-dependent manner. Repressed by RcsB via sigma factor RpoS (PubMed:15703297). Induced by acidic pH and by low magnesium (PubMed:31033442, PubMed:33045730).</text>
</comment>
<comment type="PTM">
    <text evidence="18">Phosphorylated and dephosphorylated by PhoQ.</text>
</comment>
<comment type="disruption phenotype">
    <text evidence="4 7 8 10 11 13">Decreases survival in macrophages (PubMed:10633113). Decreases tolerance to acid stress (PubMed:9573193). Abnormal expression of genes encoding virulence proteins (PubMed:19229334, PubMed:31033442, PubMed:32413287). Decreases fitness in the spleen and liver of mouse (PubMed:32413287). 10,000-fold reduction in virulence in male BALB/c mice (for strain ATCC 14028) (PubMed:2544889). Double knockout with phoQ decreases virulence in mouse (PubMed:19229334).</text>
</comment>
<comment type="miscellaneous">
    <text evidence="18">PhoP/PhoQ-signaling cascade, which activates virulence membrane proteins (PagC, PagO, PagD, PagK, PgtE and PhoN), is induced by cationic antimicrobial peptides (CAMP) (polymyxin, alpha-helical peptide C18G and sheet peptide protegrin-1) at sublethal concentrations.</text>
</comment>
<sequence>MMRVLVVEDNALLRHHLKVQLQDSGHQVDAAEDAREADYYLNEHLPDIAIVDLGLPDEDGLSLIRRWRSSDVSLPVLVLTAREGWQDKVEVLSSGADDYVTKPFHIEEVMARMQALMRRNSGLASQVINIPPFQVDLSRRELSVNEEVIKLTAFEYTIMETLIRNNGKVVSKDSLMLQLYPDAELRESHTIDVLMGRLRKKIQAQYPHDVITTVRGQGYLFELR</sequence>
<reference key="1">
    <citation type="journal article" date="1989" name="Proc. Natl. Acad. Sci. U.S.A.">
        <title>A two-component regulatory system (phoP phoQ) controls Salmonella typhimurium virulence.</title>
        <authorList>
            <person name="Miller S.I."/>
            <person name="Kukral A.M."/>
            <person name="Mekalanos J.J."/>
        </authorList>
    </citation>
    <scope>NUCLEOTIDE SEQUENCE [GENOMIC DNA]</scope>
    <scope>FUNCTION IN VIRULENCE</scope>
    <scope>DISRUPTION PHENOTYPE</scope>
    <source>
        <strain>ATCC 14028 / SGSC 2980 / CDC 6516-60 / NCTC 12023</strain>
        <strain>LT2 / SGSC1412 / ATCC 700720</strain>
    </source>
</reference>
<reference key="2">
    <citation type="journal article" date="1989" name="Proc. Natl. Acad. Sci. U.S.A.">
        <title>Salmonella typhimurium phoP virulence gene is a transcriptional regulator.</title>
        <authorList>
            <person name="Groisman E.A."/>
            <person name="Chiao E."/>
            <person name="Lipps C.J."/>
            <person name="Heffron F."/>
        </authorList>
    </citation>
    <scope>NUCLEOTIDE SEQUENCE [GENOMIC DNA]</scope>
</reference>
<reference key="3">
    <citation type="journal article" date="2001" name="Nature">
        <title>Complete genome sequence of Salmonella enterica serovar Typhimurium LT2.</title>
        <authorList>
            <person name="McClelland M."/>
            <person name="Sanderson K.E."/>
            <person name="Spieth J."/>
            <person name="Clifton S.W."/>
            <person name="Latreille P."/>
            <person name="Courtney L."/>
            <person name="Porwollik S."/>
            <person name="Ali J."/>
            <person name="Dante M."/>
            <person name="Du F."/>
            <person name="Hou S."/>
            <person name="Layman D."/>
            <person name="Leonard S."/>
            <person name="Nguyen C."/>
            <person name="Scott K."/>
            <person name="Holmes A."/>
            <person name="Grewal N."/>
            <person name="Mulvaney E."/>
            <person name="Ryan E."/>
            <person name="Sun H."/>
            <person name="Florea L."/>
            <person name="Miller W."/>
            <person name="Stoneking T."/>
            <person name="Nhan M."/>
            <person name="Waterston R."/>
            <person name="Wilson R.K."/>
        </authorList>
    </citation>
    <scope>NUCLEOTIDE SEQUENCE [LARGE SCALE GENOMIC DNA]</scope>
    <source>
        <strain>LT2 / SGSC1412 / ATCC 700720</strain>
    </source>
</reference>
<reference key="4">
    <citation type="journal article" date="1998" name="J. Bacteriol.">
        <title>A low pH-inducible, PhoPQ-dependent acid tolerance response protects Salmonella typhimurium against inorganic acid stress.</title>
        <authorList>
            <person name="Bearson B.L."/>
            <person name="Wilson L."/>
            <person name="Foster J.W."/>
        </authorList>
    </citation>
    <scope>FUNCTION IN ACID TOLERANCE</scope>
    <scope>DISRUPTION PHENOTYPE</scope>
    <source>
        <strain>LT2 / SGSC1412 / ATCC 700720</strain>
    </source>
</reference>
<reference key="5">
    <citation type="journal article" date="2000" name="J. Bacteriol.">
        <title>OmpR regulates the two-component system SsrA-ssrB in Salmonella pathogenicity island 2.</title>
        <authorList>
            <person name="Lee A.K."/>
            <person name="Detweiler C.S."/>
            <person name="Falkow S."/>
        </authorList>
    </citation>
    <scope>DISRUPTION PHENOTYPE</scope>
    <source>
        <strain evidence="14">SL1344</strain>
    </source>
</reference>
<reference key="6">
    <citation type="journal article" date="2004" name="J. Bacteriol.">
        <title>PhoP can activate its target genes in a PhoQ-independent manner.</title>
        <authorList>
            <person name="Lejona S."/>
            <person name="Castelli M.E."/>
            <person name="Cabeza M.L."/>
            <person name="Kenney L.J."/>
            <person name="Garcia Vescovi E."/>
            <person name="Soncini F.C."/>
        </authorList>
    </citation>
    <scope>EFFECT OF PHOP OVEREXPRESSION</scope>
    <scope>MUTAGENESIS OF ASP-52</scope>
    <source>
        <strain>ATCC 14028 / SGSC 2980 / CDC 6516-60 / NCTC 12023</strain>
    </source>
</reference>
<reference key="7">
    <citation type="journal article" date="2005" name="Proc. Natl. Acad. Sci. U.S.A.">
        <title>Dissecting the PhoP regulatory network of Escherichia coli and Salmonella enterica.</title>
        <authorList>
            <person name="Zwir I."/>
            <person name="Shin D."/>
            <person name="Kato A."/>
            <person name="Nishino K."/>
            <person name="Latifi T."/>
            <person name="Solomon F."/>
            <person name="Hare J.M."/>
            <person name="Huang H."/>
            <person name="Groisman E.A."/>
        </authorList>
    </citation>
    <scope>ANALYSIS OF PHOP REGULATORY NETWORK</scope>
</reference>
<reference key="8">
    <citation type="journal article" date="2009" name="PLoS Pathog.">
        <title>Coordinated regulation of virulence during systemic infection of Salmonella enterica serovar Typhimurium.</title>
        <authorList>
            <person name="Yoon H."/>
            <person name="McDermott J.E."/>
            <person name="Porwollik S."/>
            <person name="McClelland M."/>
            <person name="Heffron F."/>
        </authorList>
    </citation>
    <scope>DISRUPTION PHENOTYPE</scope>
    <source>
        <strain evidence="15">14028s / SGSC 2262</strain>
    </source>
</reference>
<reference key="9">
    <citation type="journal article" date="2015" name="Front. Microbiol.">
        <title>Host cell type-dependent translocation and PhoP-mediated positive regulation of the effector SseK1 of Salmonella enterica.</title>
        <authorList>
            <person name="Baison-Olmo F."/>
            <person name="Galindo-Moreno M."/>
            <person name="Ramos-Morales F."/>
        </authorList>
    </citation>
    <scope>FUNCTION</scope>
    <source>
        <strain>LT2 / SGSC1412 / ATCC 700720</strain>
    </source>
</reference>
<reference key="10">
    <citation type="journal article" date="2019" name="Elife">
        <title>Single cell, super-resolution imaging reveals an acid pH-dependent conformational switch in SsrB regulates SPI-2.</title>
        <authorList>
            <person name="Liew A.T.F."/>
            <person name="Foo Y.H."/>
            <person name="Gao Y."/>
            <person name="Zangoui P."/>
            <person name="Singh M.K."/>
            <person name="Gulvady R."/>
            <person name="Kenney L.J."/>
        </authorList>
    </citation>
    <scope>FUNCTION</scope>
    <scope>INDUCTION</scope>
    <scope>DISRUPTION PHENOTYPE</scope>
    <source>
        <strain evidence="16">14028s / SGSC 2262</strain>
    </source>
</reference>
<reference key="11">
    <citation type="journal article" date="2020" name="Cell Chem. Biol.">
        <title>Targeting Two-Component Systems Uncovers a Small-Molecule Inhibitor of Salmonella Virulence.</title>
        <authorList>
            <person name="Tsai C.N."/>
            <person name="MacNair C.R."/>
            <person name="Cao M.P.T."/>
            <person name="Perry J.N."/>
            <person name="Magolan J."/>
            <person name="Brown E.D."/>
            <person name="Coombes B.K."/>
        </authorList>
    </citation>
    <scope>DISRUPTION PHENOTYPE</scope>
</reference>
<reference key="12">
    <citation type="journal article" date="2020" name="Nucleic Acids Res.">
        <title>Horizontally acquired regulatory gene activates ancestral regulatory system to promote Salmonella virulence.</title>
        <authorList>
            <person name="Choi J."/>
            <person name="Groisman E.A."/>
        </authorList>
    </citation>
    <scope>INDUCTION</scope>
    <source>
        <strain evidence="17">14028s / SGSC 2262</strain>
    </source>
</reference>
<feature type="chain" id="PRO_0000081201" description="Virulence transcriptional regulatory protein PhoP">
    <location>
        <begin position="1"/>
        <end position="224"/>
    </location>
</feature>
<feature type="domain" description="Response regulatory" evidence="2">
    <location>
        <begin position="3"/>
        <end position="117"/>
    </location>
</feature>
<feature type="DNA-binding region" description="OmpR/PhoB-type" evidence="3">
    <location>
        <begin position="125"/>
        <end position="223"/>
    </location>
</feature>
<feature type="modified residue" description="4-aspartylphosphate" evidence="2">
    <location>
        <position position="52"/>
    </location>
</feature>
<feature type="mutagenesis site" description="Expression at concentrations above 30 uM retains a protein-protein interaction and PhoQ-independent induction of PAG. Yields insoluble purified protein above 7 uM." evidence="5">
    <original>D</original>
    <variation>A</variation>
    <location>
        <position position="52"/>
    </location>
</feature>
<proteinExistence type="evidence at protein level"/>
<protein>
    <recommendedName>
        <fullName>Virulence transcriptional regulatory protein PhoP</fullName>
    </recommendedName>
    <alternativeName>
        <fullName>Acid shock protein 29</fullName>
        <shortName>ASP29</shortName>
    </alternativeName>
</protein>